<sequence length="101" mass="11607">MAKQSMKAREVVRVKLANKYRAKREELKAIISGVNSSDEDRWDAVLKLQSLPRDSSPSRQRNRCNQTGRPHGFLRKFGLSRIKVRETAMRGEIPGLKKASW</sequence>
<reference key="1">
    <citation type="journal article" date="2007" name="PLoS Genet.">
        <title>The complete genome sequence of Yersinia pseudotuberculosis IP31758, the causative agent of Far East scarlet-like fever.</title>
        <authorList>
            <person name="Eppinger M."/>
            <person name="Rosovitz M.J."/>
            <person name="Fricke W.F."/>
            <person name="Rasko D.A."/>
            <person name="Kokorina G."/>
            <person name="Fayolle C."/>
            <person name="Lindler L.E."/>
            <person name="Carniel E."/>
            <person name="Ravel J."/>
        </authorList>
    </citation>
    <scope>NUCLEOTIDE SEQUENCE [LARGE SCALE GENOMIC DNA]</scope>
    <source>
        <strain>IP 31758</strain>
    </source>
</reference>
<proteinExistence type="inferred from homology"/>
<keyword id="KW-0687">Ribonucleoprotein</keyword>
<keyword id="KW-0689">Ribosomal protein</keyword>
<keyword id="KW-0694">RNA-binding</keyword>
<keyword id="KW-0699">rRNA-binding</keyword>
<organism>
    <name type="scientific">Yersinia pseudotuberculosis serotype O:1b (strain IP 31758)</name>
    <dbReference type="NCBI Taxonomy" id="349747"/>
    <lineage>
        <taxon>Bacteria</taxon>
        <taxon>Pseudomonadati</taxon>
        <taxon>Pseudomonadota</taxon>
        <taxon>Gammaproteobacteria</taxon>
        <taxon>Enterobacterales</taxon>
        <taxon>Yersiniaceae</taxon>
        <taxon>Yersinia</taxon>
    </lineage>
</organism>
<accession>A7FNM1</accession>
<dbReference type="EMBL" id="CP000720">
    <property type="protein sequence ID" value="ABS47405.1"/>
    <property type="molecule type" value="Genomic_DNA"/>
</dbReference>
<dbReference type="RefSeq" id="WP_002213330.1">
    <property type="nucleotide sequence ID" value="NC_009708.1"/>
</dbReference>
<dbReference type="SMR" id="A7FNM1"/>
<dbReference type="GeneID" id="96663183"/>
<dbReference type="KEGG" id="ypi:YpsIP31758_3901"/>
<dbReference type="HOGENOM" id="CLU_139869_0_1_6"/>
<dbReference type="Proteomes" id="UP000002412">
    <property type="component" value="Chromosome"/>
</dbReference>
<dbReference type="GO" id="GO:0005737">
    <property type="term" value="C:cytoplasm"/>
    <property type="evidence" value="ECO:0007669"/>
    <property type="project" value="UniProtKB-ARBA"/>
</dbReference>
<dbReference type="GO" id="GO:0015935">
    <property type="term" value="C:small ribosomal subunit"/>
    <property type="evidence" value="ECO:0007669"/>
    <property type="project" value="TreeGrafter"/>
</dbReference>
<dbReference type="GO" id="GO:0019843">
    <property type="term" value="F:rRNA binding"/>
    <property type="evidence" value="ECO:0007669"/>
    <property type="project" value="UniProtKB-UniRule"/>
</dbReference>
<dbReference type="GO" id="GO:0003735">
    <property type="term" value="F:structural constituent of ribosome"/>
    <property type="evidence" value="ECO:0007669"/>
    <property type="project" value="InterPro"/>
</dbReference>
<dbReference type="GO" id="GO:0006412">
    <property type="term" value="P:translation"/>
    <property type="evidence" value="ECO:0007669"/>
    <property type="project" value="UniProtKB-UniRule"/>
</dbReference>
<dbReference type="FunFam" id="1.10.287.1480:FF:000001">
    <property type="entry name" value="30S ribosomal protein S14"/>
    <property type="match status" value="1"/>
</dbReference>
<dbReference type="Gene3D" id="1.10.287.1480">
    <property type="match status" value="1"/>
</dbReference>
<dbReference type="HAMAP" id="MF_00537">
    <property type="entry name" value="Ribosomal_uS14_1"/>
    <property type="match status" value="1"/>
</dbReference>
<dbReference type="InterPro" id="IPR001209">
    <property type="entry name" value="Ribosomal_uS14"/>
</dbReference>
<dbReference type="InterPro" id="IPR023036">
    <property type="entry name" value="Ribosomal_uS14_bac/plastid"/>
</dbReference>
<dbReference type="InterPro" id="IPR018271">
    <property type="entry name" value="Ribosomal_uS14_CS"/>
</dbReference>
<dbReference type="NCBIfam" id="NF006477">
    <property type="entry name" value="PRK08881.1"/>
    <property type="match status" value="1"/>
</dbReference>
<dbReference type="PANTHER" id="PTHR19836">
    <property type="entry name" value="30S RIBOSOMAL PROTEIN S14"/>
    <property type="match status" value="1"/>
</dbReference>
<dbReference type="PANTHER" id="PTHR19836:SF19">
    <property type="entry name" value="SMALL RIBOSOMAL SUBUNIT PROTEIN US14M"/>
    <property type="match status" value="1"/>
</dbReference>
<dbReference type="Pfam" id="PF00253">
    <property type="entry name" value="Ribosomal_S14"/>
    <property type="match status" value="1"/>
</dbReference>
<dbReference type="SUPFAM" id="SSF57716">
    <property type="entry name" value="Glucocorticoid receptor-like (DNA-binding domain)"/>
    <property type="match status" value="1"/>
</dbReference>
<dbReference type="PROSITE" id="PS00527">
    <property type="entry name" value="RIBOSOMAL_S14"/>
    <property type="match status" value="1"/>
</dbReference>
<gene>
    <name evidence="1" type="primary">rpsN</name>
    <name type="ordered locus">YpsIP31758_3901</name>
</gene>
<evidence type="ECO:0000255" key="1">
    <source>
        <dbReference type="HAMAP-Rule" id="MF_00537"/>
    </source>
</evidence>
<evidence type="ECO:0000256" key="2">
    <source>
        <dbReference type="SAM" id="MobiDB-lite"/>
    </source>
</evidence>
<evidence type="ECO:0000305" key="3"/>
<feature type="chain" id="PRO_1000128650" description="Small ribosomal subunit protein uS14">
    <location>
        <begin position="1"/>
        <end position="101"/>
    </location>
</feature>
<feature type="region of interest" description="Disordered" evidence="2">
    <location>
        <begin position="49"/>
        <end position="70"/>
    </location>
</feature>
<feature type="compositionally biased region" description="Polar residues" evidence="2">
    <location>
        <begin position="52"/>
        <end position="68"/>
    </location>
</feature>
<comment type="function">
    <text evidence="1">Binds 16S rRNA, required for the assembly of 30S particles and may also be responsible for determining the conformation of the 16S rRNA at the A site.</text>
</comment>
<comment type="subunit">
    <text evidence="1">Part of the 30S ribosomal subunit. Contacts proteins S3 and S10.</text>
</comment>
<comment type="similarity">
    <text evidence="1">Belongs to the universal ribosomal protein uS14 family.</text>
</comment>
<name>RS14_YERP3</name>
<protein>
    <recommendedName>
        <fullName evidence="1">Small ribosomal subunit protein uS14</fullName>
    </recommendedName>
    <alternativeName>
        <fullName evidence="3">30S ribosomal protein S14</fullName>
    </alternativeName>
</protein>